<name>DNAI2_HUMAN</name>
<evidence type="ECO:0000250" key="1">
    <source>
        <dbReference type="UniProtKB" id="A2AC93"/>
    </source>
</evidence>
<evidence type="ECO:0000250" key="2">
    <source>
        <dbReference type="UniProtKB" id="Q4QR00"/>
    </source>
</evidence>
<evidence type="ECO:0000256" key="3">
    <source>
        <dbReference type="SAM" id="MobiDB-lite"/>
    </source>
</evidence>
<evidence type="ECO:0000269" key="4">
    <source>
    </source>
</evidence>
<evidence type="ECO:0000269" key="5">
    <source>
    </source>
</evidence>
<evidence type="ECO:0000269" key="6">
    <source>
    </source>
</evidence>
<evidence type="ECO:0000269" key="7">
    <source>
    </source>
</evidence>
<evidence type="ECO:0000269" key="8">
    <source>
    </source>
</evidence>
<evidence type="ECO:0000269" key="9">
    <source>
    </source>
</evidence>
<evidence type="ECO:0000269" key="10">
    <source>
    </source>
</evidence>
<evidence type="ECO:0000269" key="11">
    <source>
    </source>
</evidence>
<evidence type="ECO:0000269" key="12">
    <source ref="2"/>
</evidence>
<evidence type="ECO:0000269" key="13">
    <source ref="4"/>
</evidence>
<evidence type="ECO:0000303" key="14">
    <source>
    </source>
</evidence>
<evidence type="ECO:0000305" key="15"/>
<evidence type="ECO:0000312" key="16">
    <source>
        <dbReference type="HGNC" id="HGNC:18744"/>
    </source>
</evidence>
<accession>Q9GZS0</accession>
<accession>C9J0S6</accession>
<accession>Q8IUW4</accession>
<accession>Q9H179</accession>
<accession>Q9NT53</accession>
<keyword id="KW-0002">3D-structure</keyword>
<keyword id="KW-0025">Alternative splicing</keyword>
<keyword id="KW-0966">Cell projection</keyword>
<keyword id="KW-1186">Ciliopathy</keyword>
<keyword id="KW-0969">Cilium</keyword>
<keyword id="KW-0970">Cilium biogenesis/degradation</keyword>
<keyword id="KW-0963">Cytoplasm</keyword>
<keyword id="KW-0206">Cytoskeleton</keyword>
<keyword id="KW-0243">Dynein</keyword>
<keyword id="KW-1012">Kartagener syndrome</keyword>
<keyword id="KW-0493">Microtubule</keyword>
<keyword id="KW-0505">Motor protein</keyword>
<keyword id="KW-0990">Primary ciliary dyskinesia</keyword>
<keyword id="KW-1267">Proteomics identification</keyword>
<keyword id="KW-1185">Reference proteome</keyword>
<keyword id="KW-0677">Repeat</keyword>
<keyword id="KW-0853">WD repeat</keyword>
<proteinExistence type="evidence at protein level"/>
<gene>
    <name evidence="16" type="primary">DNAI2</name>
</gene>
<dbReference type="EMBL" id="AF250288">
    <property type="protein sequence ID" value="AAG38489.1"/>
    <property type="molecule type" value="mRNA"/>
</dbReference>
<dbReference type="EMBL" id="AF253097">
    <property type="protein sequence ID" value="AAG38000.1"/>
    <property type="molecule type" value="Genomic_DNA"/>
</dbReference>
<dbReference type="EMBL" id="AF253087">
    <property type="protein sequence ID" value="AAG38000.1"/>
    <property type="status" value="JOINED"/>
    <property type="molecule type" value="Genomic_DNA"/>
</dbReference>
<dbReference type="EMBL" id="AF253088">
    <property type="protein sequence ID" value="AAG38000.1"/>
    <property type="status" value="JOINED"/>
    <property type="molecule type" value="Genomic_DNA"/>
</dbReference>
<dbReference type="EMBL" id="AF253089">
    <property type="protein sequence ID" value="AAG38000.1"/>
    <property type="status" value="JOINED"/>
    <property type="molecule type" value="Genomic_DNA"/>
</dbReference>
<dbReference type="EMBL" id="AF260782">
    <property type="protein sequence ID" value="AAG38000.1"/>
    <property type="status" value="JOINED"/>
    <property type="molecule type" value="Genomic_DNA"/>
</dbReference>
<dbReference type="EMBL" id="AF253090">
    <property type="protein sequence ID" value="AAG38000.1"/>
    <property type="status" value="JOINED"/>
    <property type="molecule type" value="Genomic_DNA"/>
</dbReference>
<dbReference type="EMBL" id="AF253091">
    <property type="protein sequence ID" value="AAG38000.1"/>
    <property type="status" value="JOINED"/>
    <property type="molecule type" value="Genomic_DNA"/>
</dbReference>
<dbReference type="EMBL" id="AF253092">
    <property type="protein sequence ID" value="AAG38000.1"/>
    <property type="status" value="JOINED"/>
    <property type="molecule type" value="Genomic_DNA"/>
</dbReference>
<dbReference type="EMBL" id="AF253093">
    <property type="protein sequence ID" value="AAG38000.1"/>
    <property type="status" value="JOINED"/>
    <property type="molecule type" value="Genomic_DNA"/>
</dbReference>
<dbReference type="EMBL" id="AF253094">
    <property type="protein sequence ID" value="AAG38000.1"/>
    <property type="status" value="JOINED"/>
    <property type="molecule type" value="Genomic_DNA"/>
</dbReference>
<dbReference type="EMBL" id="AF253095">
    <property type="protein sequence ID" value="AAG38000.1"/>
    <property type="status" value="JOINED"/>
    <property type="molecule type" value="Genomic_DNA"/>
</dbReference>
<dbReference type="EMBL" id="AF253096">
    <property type="protein sequence ID" value="AAG38000.1"/>
    <property type="status" value="JOINED"/>
    <property type="molecule type" value="Genomic_DNA"/>
</dbReference>
<dbReference type="EMBL" id="AJ295276">
    <property type="protein sequence ID" value="CAC17464.1"/>
    <property type="molecule type" value="mRNA"/>
</dbReference>
<dbReference type="EMBL" id="AC103809">
    <property type="status" value="NOT_ANNOTATED_CDS"/>
    <property type="molecule type" value="Genomic_DNA"/>
</dbReference>
<dbReference type="EMBL" id="CH471099">
    <property type="protein sequence ID" value="EAW89146.1"/>
    <property type="molecule type" value="Genomic_DNA"/>
</dbReference>
<dbReference type="EMBL" id="BC039582">
    <property type="protein sequence ID" value="AAH39582.1"/>
    <property type="molecule type" value="mRNA"/>
</dbReference>
<dbReference type="EMBL" id="AL137526">
    <property type="protein sequence ID" value="CAB70790.1"/>
    <property type="status" value="ALT_SEQ"/>
    <property type="molecule type" value="mRNA"/>
</dbReference>
<dbReference type="CCDS" id="CCDS11697.1">
    <molecule id="Q9GZS0-1"/>
</dbReference>
<dbReference type="CCDS" id="CCDS58589.1">
    <molecule id="Q9GZS0-2"/>
</dbReference>
<dbReference type="PIR" id="T46370">
    <property type="entry name" value="T46370"/>
</dbReference>
<dbReference type="RefSeq" id="NP_001166281.1">
    <molecule id="Q9GZS0-2"/>
    <property type="nucleotide sequence ID" value="NM_001172810.3"/>
</dbReference>
<dbReference type="RefSeq" id="NP_075462.3">
    <molecule id="Q9GZS0-1"/>
    <property type="nucleotide sequence ID" value="NM_023036.6"/>
</dbReference>
<dbReference type="PDB" id="8J07">
    <property type="method" value="EM"/>
    <property type="resolution" value="4.10 A"/>
    <property type="chains" value="m2/o2/q2/s2=1-605"/>
</dbReference>
<dbReference type="PDBsum" id="8J07"/>
<dbReference type="EMDB" id="EMD-35888"/>
<dbReference type="SMR" id="Q9GZS0"/>
<dbReference type="BioGRID" id="122183">
    <property type="interactions" value="92"/>
</dbReference>
<dbReference type="CORUM" id="Q9GZS0"/>
<dbReference type="FunCoup" id="Q9GZS0">
    <property type="interactions" value="54"/>
</dbReference>
<dbReference type="IntAct" id="Q9GZS0">
    <property type="interactions" value="77"/>
</dbReference>
<dbReference type="STRING" id="9606.ENSP00000400252"/>
<dbReference type="iPTMnet" id="Q9GZS0"/>
<dbReference type="PhosphoSitePlus" id="Q9GZS0"/>
<dbReference type="BioMuta" id="DNAI2"/>
<dbReference type="DMDM" id="311033373"/>
<dbReference type="jPOST" id="Q9GZS0"/>
<dbReference type="MassIVE" id="Q9GZS0"/>
<dbReference type="PaxDb" id="9606-ENSP00000400252"/>
<dbReference type="PeptideAtlas" id="Q9GZS0"/>
<dbReference type="ProteomicsDB" id="80122">
    <molecule id="Q9GZS0-1"/>
</dbReference>
<dbReference type="ProteomicsDB" id="80123">
    <molecule id="Q9GZS0-2"/>
</dbReference>
<dbReference type="Antibodypedia" id="31949">
    <property type="antibodies" value="218 antibodies from 29 providers"/>
</dbReference>
<dbReference type="DNASU" id="64446"/>
<dbReference type="Ensembl" id="ENST00000311014.11">
    <molecule id="Q9GZS0-1"/>
    <property type="protein sequence ID" value="ENSP00000308312.6"/>
    <property type="gene ID" value="ENSG00000171595.14"/>
</dbReference>
<dbReference type="Ensembl" id="ENST00000446837.2">
    <molecule id="Q9GZS0-1"/>
    <property type="protein sequence ID" value="ENSP00000400252.2"/>
    <property type="gene ID" value="ENSG00000171595.14"/>
</dbReference>
<dbReference type="Ensembl" id="ENST00000582036.5">
    <molecule id="Q9GZS0-2"/>
    <property type="protein sequence ID" value="ENSP00000461950.1"/>
    <property type="gene ID" value="ENSG00000171595.14"/>
</dbReference>
<dbReference type="GeneID" id="64446"/>
<dbReference type="KEGG" id="hsa:64446"/>
<dbReference type="MANE-Select" id="ENST00000311014.11">
    <property type="protein sequence ID" value="ENSP00000308312.6"/>
    <property type="RefSeq nucleotide sequence ID" value="NM_023036.6"/>
    <property type="RefSeq protein sequence ID" value="NP_075462.3"/>
</dbReference>
<dbReference type="UCSC" id="uc002jkf.4">
    <molecule id="Q9GZS0-1"/>
    <property type="organism name" value="human"/>
</dbReference>
<dbReference type="AGR" id="HGNC:18744"/>
<dbReference type="CTD" id="64446"/>
<dbReference type="DisGeNET" id="64446"/>
<dbReference type="GeneCards" id="DNAI2"/>
<dbReference type="GeneReviews" id="DNAI2"/>
<dbReference type="HGNC" id="HGNC:18744">
    <property type="gene designation" value="DNAI2"/>
</dbReference>
<dbReference type="HPA" id="ENSG00000171595">
    <property type="expression patterns" value="Group enriched (fallopian tube, testis)"/>
</dbReference>
<dbReference type="MalaCards" id="DNAI2"/>
<dbReference type="MIM" id="605483">
    <property type="type" value="gene"/>
</dbReference>
<dbReference type="MIM" id="612444">
    <property type="type" value="phenotype"/>
</dbReference>
<dbReference type="neXtProt" id="NX_Q9GZS0"/>
<dbReference type="OpenTargets" id="ENSG00000171595"/>
<dbReference type="Orphanet" id="244">
    <property type="disease" value="Primary ciliary dyskinesia"/>
</dbReference>
<dbReference type="PharmGKB" id="PA38669"/>
<dbReference type="VEuPathDB" id="HostDB:ENSG00000171595"/>
<dbReference type="eggNOG" id="KOG1587">
    <property type="taxonomic scope" value="Eukaryota"/>
</dbReference>
<dbReference type="GeneTree" id="ENSGT00940000161939"/>
<dbReference type="HOGENOM" id="CLU_022406_1_0_1"/>
<dbReference type="InParanoid" id="Q9GZS0"/>
<dbReference type="OMA" id="WDFFYRQ"/>
<dbReference type="OrthoDB" id="366230at2759"/>
<dbReference type="PAN-GO" id="Q9GZS0">
    <property type="GO annotations" value="5 GO annotations based on evolutionary models"/>
</dbReference>
<dbReference type="PhylomeDB" id="Q9GZS0"/>
<dbReference type="TreeFam" id="TF300553"/>
<dbReference type="PathwayCommons" id="Q9GZS0"/>
<dbReference type="SignaLink" id="Q9GZS0"/>
<dbReference type="BioGRID-ORCS" id="64446">
    <property type="hits" value="15 hits in 1150 CRISPR screens"/>
</dbReference>
<dbReference type="GeneWiki" id="DNAI2"/>
<dbReference type="GenomeRNAi" id="64446"/>
<dbReference type="Pharos" id="Q9GZS0">
    <property type="development level" value="Tbio"/>
</dbReference>
<dbReference type="PRO" id="PR:Q9GZS0"/>
<dbReference type="Proteomes" id="UP000005640">
    <property type="component" value="Chromosome 17"/>
</dbReference>
<dbReference type="RNAct" id="Q9GZS0">
    <property type="molecule type" value="protein"/>
</dbReference>
<dbReference type="Bgee" id="ENSG00000171595">
    <property type="expression patterns" value="Expressed in right uterine tube and 97 other cell types or tissues"/>
</dbReference>
<dbReference type="ExpressionAtlas" id="Q9GZS0">
    <property type="expression patterns" value="baseline and differential"/>
</dbReference>
<dbReference type="GO" id="GO:0005858">
    <property type="term" value="C:axonemal dynein complex"/>
    <property type="evidence" value="ECO:0000315"/>
    <property type="project" value="MGI"/>
</dbReference>
<dbReference type="GO" id="GO:0005930">
    <property type="term" value="C:axoneme"/>
    <property type="evidence" value="ECO:0000314"/>
    <property type="project" value="SYSCILIA_CCNET"/>
</dbReference>
<dbReference type="GO" id="GO:0120293">
    <property type="term" value="C:dynein axonemal particle"/>
    <property type="evidence" value="ECO:0000250"/>
    <property type="project" value="UniProtKB"/>
</dbReference>
<dbReference type="GO" id="GO:0009897">
    <property type="term" value="C:external side of plasma membrane"/>
    <property type="evidence" value="ECO:0007669"/>
    <property type="project" value="Ensembl"/>
</dbReference>
<dbReference type="GO" id="GO:0097386">
    <property type="term" value="C:glial cell projection"/>
    <property type="evidence" value="ECO:0007669"/>
    <property type="project" value="Ensembl"/>
</dbReference>
<dbReference type="GO" id="GO:0005874">
    <property type="term" value="C:microtubule"/>
    <property type="evidence" value="ECO:0007669"/>
    <property type="project" value="UniProtKB-KW"/>
</dbReference>
<dbReference type="GO" id="GO:0036157">
    <property type="term" value="C:outer dynein arm"/>
    <property type="evidence" value="ECO:0000315"/>
    <property type="project" value="SYSCILIA_CCNET"/>
</dbReference>
<dbReference type="GO" id="GO:0036126">
    <property type="term" value="C:sperm flagellum"/>
    <property type="evidence" value="ECO:0000314"/>
    <property type="project" value="SYSCILIA_CCNET"/>
</dbReference>
<dbReference type="GO" id="GO:0045504">
    <property type="term" value="F:dynein heavy chain binding"/>
    <property type="evidence" value="ECO:0000318"/>
    <property type="project" value="GO_Central"/>
</dbReference>
<dbReference type="GO" id="GO:0045503">
    <property type="term" value="F:dynein light chain binding"/>
    <property type="evidence" value="ECO:0000318"/>
    <property type="project" value="GO_Central"/>
</dbReference>
<dbReference type="GO" id="GO:0003777">
    <property type="term" value="F:microtubule motor activity"/>
    <property type="evidence" value="ECO:0000315"/>
    <property type="project" value="MGI"/>
</dbReference>
<dbReference type="GO" id="GO:0060271">
    <property type="term" value="P:cilium assembly"/>
    <property type="evidence" value="ECO:0000315"/>
    <property type="project" value="MGI"/>
</dbReference>
<dbReference type="GO" id="GO:0003341">
    <property type="term" value="P:cilium movement"/>
    <property type="evidence" value="ECO:0000315"/>
    <property type="project" value="SYSCILIA_CCNET"/>
</dbReference>
<dbReference type="GO" id="GO:0007368">
    <property type="term" value="P:determination of left/right symmetry"/>
    <property type="evidence" value="ECO:0000315"/>
    <property type="project" value="SYSCILIA_CCNET"/>
</dbReference>
<dbReference type="GO" id="GO:0036158">
    <property type="term" value="P:outer dynein arm assembly"/>
    <property type="evidence" value="ECO:0000315"/>
    <property type="project" value="SYSCILIA_CCNET"/>
</dbReference>
<dbReference type="FunFam" id="2.130.10.10:FF:000380">
    <property type="entry name" value="Dynein intermediate chain 2, axonemal"/>
    <property type="match status" value="1"/>
</dbReference>
<dbReference type="FunFam" id="2.130.10.10:FF:000371">
    <property type="entry name" value="dynein intermediate chain 2, axonemal"/>
    <property type="match status" value="1"/>
</dbReference>
<dbReference type="Gene3D" id="2.130.10.10">
    <property type="entry name" value="YVTN repeat-like/Quinoprotein amine dehydrogenase"/>
    <property type="match status" value="2"/>
</dbReference>
<dbReference type="InterPro" id="IPR050687">
    <property type="entry name" value="Dynein_IC"/>
</dbReference>
<dbReference type="InterPro" id="IPR015943">
    <property type="entry name" value="WD40/YVTN_repeat-like_dom_sf"/>
</dbReference>
<dbReference type="InterPro" id="IPR036322">
    <property type="entry name" value="WD40_repeat_dom_sf"/>
</dbReference>
<dbReference type="InterPro" id="IPR001680">
    <property type="entry name" value="WD40_rpt"/>
</dbReference>
<dbReference type="PANTHER" id="PTHR12442:SF7">
    <property type="entry name" value="DYNEIN AXONEMAL INTERMEDIATE CHAIN 2"/>
    <property type="match status" value="1"/>
</dbReference>
<dbReference type="PANTHER" id="PTHR12442">
    <property type="entry name" value="DYNEIN INTERMEDIATE CHAIN"/>
    <property type="match status" value="1"/>
</dbReference>
<dbReference type="Pfam" id="PF00400">
    <property type="entry name" value="WD40"/>
    <property type="match status" value="1"/>
</dbReference>
<dbReference type="SMART" id="SM00320">
    <property type="entry name" value="WD40"/>
    <property type="match status" value="5"/>
</dbReference>
<dbReference type="SUPFAM" id="SSF50978">
    <property type="entry name" value="WD40 repeat-like"/>
    <property type="match status" value="1"/>
</dbReference>
<dbReference type="PROSITE" id="PS50294">
    <property type="entry name" value="WD_REPEATS_REGION"/>
    <property type="match status" value="1"/>
</dbReference>
<organism>
    <name type="scientific">Homo sapiens</name>
    <name type="common">Human</name>
    <dbReference type="NCBI Taxonomy" id="9606"/>
    <lineage>
        <taxon>Eukaryota</taxon>
        <taxon>Metazoa</taxon>
        <taxon>Chordata</taxon>
        <taxon>Craniata</taxon>
        <taxon>Vertebrata</taxon>
        <taxon>Euteleostomi</taxon>
        <taxon>Mammalia</taxon>
        <taxon>Eutheria</taxon>
        <taxon>Euarchontoglires</taxon>
        <taxon>Primates</taxon>
        <taxon>Haplorrhini</taxon>
        <taxon>Catarrhini</taxon>
        <taxon>Hominidae</taxon>
        <taxon>Homo</taxon>
    </lineage>
</organism>
<comment type="function">
    <text>Part of the dynein complex of respiratory cilia.</text>
</comment>
<comment type="subunit">
    <text evidence="1 9 10 15">Consists of at least two heavy chains and a number of intermediate and light chains (Probable). Interacts with DNAAF2 (By similarity). Interacts with DNAAF6/PIH1D3 (PubMed:28176794). Interacts with HEATR2; probably involved in outer arm dynein assembly (PubMed:25232951). Interacts with CFAP53 (By similarity).</text>
</comment>
<comment type="subcellular location">
    <subcellularLocation>
        <location evidence="11">Cytoplasm</location>
        <location evidence="11">Cytoskeleton</location>
        <location evidence="11">Cilium axoneme</location>
    </subcellularLocation>
    <subcellularLocation>
        <location evidence="2">Dynein axonemal particle</location>
    </subcellularLocation>
    <text evidence="11">Located in the proximal region of respiratory cilia.</text>
</comment>
<comment type="alternative products">
    <event type="alternative splicing"/>
    <isoform>
        <id>Q9GZS0-1</id>
        <name>1</name>
        <sequence type="displayed"/>
    </isoform>
    <isoform>
        <id>Q9GZS0-2</id>
        <name>2</name>
        <sequence type="described" ref="VSP_036541"/>
    </isoform>
</comment>
<comment type="tissue specificity">
    <text evidence="11">Highly expressed in trachea and testis. Expressed in respiratory ciliated cells (at protein level) (PubMed:33139725).</text>
</comment>
<comment type="disease" evidence="7 8">
    <disease id="DI-00933">
        <name>Ciliary dyskinesia, primary, 9</name>
        <acronym>CILD9</acronym>
        <description>A disorder characterized by abnormalities of motile cilia. Respiratory infections leading to chronic inflammation and bronchiectasis are recurrent, due to defects in the respiratory cilia; reduced fertility is often observed in male patients due to abnormalities of sperm tails. Half of the patients exhibit randomization of left-right body asymmetry and situs inversus, due to dysfunction of monocilia at the embryonic node. Primary ciliary dyskinesia associated with situs inversus is referred to as Kartagener syndrome.</description>
        <dbReference type="MIM" id="612444"/>
    </disease>
    <text>The disease is caused by variants affecting the gene represented in this entry.</text>
</comment>
<comment type="similarity">
    <text evidence="15">Belongs to the dynein intermediate chain family.</text>
</comment>
<comment type="sequence caution" evidence="15">
    <conflict type="miscellaneous discrepancy">
        <sequence resource="EMBL-CDS" id="CAB70790"/>
    </conflict>
    <text>Intron retention.</text>
</comment>
<sequence>MEIVYVYVKKRSEFGKQCNFSDRQAELNIDIMPNPELAEQFVERNPVDTGIQCSISMSEHEANSERFEMETRGVNHVEGGWPKDVNPLELEQTIRFRKKVEKDENYVNAIMQLGSIMEHCIKQNNAIDIYEEYFNDEEAMEVMEEDPSAKTINVFRDPQEIKRAATHLSWHPDGNRKLAVAYSCLDFQRAPVGMSSDSYIWDLENPNKPELALKPSSPLVTLEFNPKDSHVLLGGCYNGQIACWDTRKGSLVAELSTIESSHRDPVYGTIWLQSKTGTECFSASTDGQVMWWDIRKMSEPTEVVILDITKKEQLENALGAISLEFESTLPTKFMVGTEQGIVISCNRKAKTSAEKIVCTFPGHHGPIYALQRNPFYPKNFLTVGDWTARIWSEDSRESSIMWTKYHMAYLTDAAWSPVRPTVFFTTRMDGTLDIWDFMFEQCDPTLSLKVCDEALFCLRVQDNGCLIACGSQLGTTTLLEVSPGLSTLQRNEKNVASSMFERETRREKILEARHREMRLKEKGKAEGRDEEQTDEELAVDLEALVSKAEEEFFDIIFAELKKKEADAIKLTPVPQQPSPEEDQVVEEGEEAAGEEGDEEVEEDLA</sequence>
<feature type="chain" id="PRO_0000114659" description="Dynein axonemal intermediate chain 2">
    <location>
        <begin position="1"/>
        <end position="605"/>
    </location>
</feature>
<feature type="repeat" description="WD 1">
    <location>
        <begin position="150"/>
        <end position="203"/>
    </location>
</feature>
<feature type="repeat" description="WD 2">
    <location>
        <begin position="208"/>
        <end position="246"/>
    </location>
</feature>
<feature type="repeat" description="WD 3">
    <location>
        <begin position="253"/>
        <end position="294"/>
    </location>
</feature>
<feature type="repeat" description="WD 4">
    <location>
        <begin position="301"/>
        <end position="347"/>
    </location>
</feature>
<feature type="repeat" description="WD 5">
    <location>
        <begin position="355"/>
        <end position="393"/>
    </location>
</feature>
<feature type="repeat" description="WD 5">
    <location>
        <begin position="399"/>
        <end position="437"/>
    </location>
</feature>
<feature type="repeat" description="WD 5">
    <location>
        <begin position="443"/>
        <end position="481"/>
    </location>
</feature>
<feature type="region of interest" description="Disordered" evidence="3">
    <location>
        <begin position="568"/>
        <end position="605"/>
    </location>
</feature>
<feature type="compositionally biased region" description="Acidic residues" evidence="3">
    <location>
        <begin position="579"/>
        <end position="605"/>
    </location>
</feature>
<feature type="splice variant" id="VSP_036541" description="In isoform 2." evidence="14">
    <location>
        <begin position="450"/>
        <end position="461"/>
    </location>
</feature>
<feature type="sequence variant" id="VAR_061140" description="In dbSNP:rs28725418.">
    <original>V</original>
    <variation>I</variation>
    <location>
        <position position="495"/>
    </location>
</feature>
<feature type="sequence variant" id="VAR_033880" description="In dbSNP:rs1979370." evidence="4 5 6 12 13">
    <original>A</original>
    <variation>T</variation>
    <location>
        <position position="558"/>
    </location>
</feature>
<feature type="sequence conflict" description="In Ref. 2; CAC17464." evidence="15" ref="2">
    <original>E</original>
    <variation>K</variation>
    <location>
        <position position="70"/>
    </location>
</feature>
<feature type="sequence conflict" description="In Ref. 2; CAC17464." evidence="15" ref="2">
    <original>G</original>
    <variation>E</variation>
    <location>
        <position position="593"/>
    </location>
</feature>
<protein>
    <recommendedName>
        <fullName evidence="15">Dynein axonemal intermediate chain 2</fullName>
    </recommendedName>
    <alternativeName>
        <fullName>Axonemal dynein intermediate chain 2</fullName>
    </alternativeName>
</protein>
<reference key="1">
    <citation type="journal article" date="2000" name="Hum. Genet.">
        <title>The human dynein intermediate chain 2 gene (DNAI2): cloning, mapping, expression pattern, and evaluation as a candidate for primary ciliary dyskinesia.</title>
        <authorList>
            <person name="Pennarun G."/>
            <person name="Chapelin C."/>
            <person name="Escudier E."/>
            <person name="Bridoux A.-M."/>
            <person name="Dastot F."/>
            <person name="Cacheux V."/>
            <person name="Goossens M."/>
            <person name="Amselem S."/>
            <person name="Duriez B."/>
        </authorList>
    </citation>
    <scope>NUCLEOTIDE SEQUENCE [GENOMIC DNA / MRNA] (ISOFORM 1)</scope>
    <scope>VARIANT THR-558</scope>
    <source>
        <tissue>Testis</tissue>
    </source>
</reference>
<reference key="2">
    <citation type="journal article" date="2000" name="Eur. J. Hum. Genet.">
        <title>No deleterious mutations were found in three genes (HFH4, LC8, DNAI2) on human chromosome 17q in patients with primary ciliary dyskinesia.</title>
        <authorList>
            <person name="Bartoloni L."/>
            <person name="Mitchison H."/>
            <person name="Pazour G.J."/>
            <person name="Meeks M."/>
            <person name="Chung E."/>
            <person name="Dickert B.L."/>
            <person name="Spiden S."/>
            <person name="Gehrig C."/>
            <person name="Rossier C."/>
            <person name="DeLozier-Blanchet C.D."/>
            <person name="Blouin J.-L."/>
            <person name="Witman G.B."/>
            <person name="Gardiner R.M."/>
            <person name="Antonarakis S.E."/>
        </authorList>
    </citation>
    <scope>NUCLEOTIDE SEQUENCE [MRNA] (ISOFORM 1)</scope>
    <scope>VARIANT THR-558</scope>
    <source>
        <tissue>Testis</tissue>
    </source>
</reference>
<reference key="3">
    <citation type="journal article" date="2006" name="Nature">
        <title>DNA sequence of human chromosome 17 and analysis of rearrangement in the human lineage.</title>
        <authorList>
            <person name="Zody M.C."/>
            <person name="Garber M."/>
            <person name="Adams D.J."/>
            <person name="Sharpe T."/>
            <person name="Harrow J."/>
            <person name="Lupski J.R."/>
            <person name="Nicholson C."/>
            <person name="Searle S.M."/>
            <person name="Wilming L."/>
            <person name="Young S.K."/>
            <person name="Abouelleil A."/>
            <person name="Allen N.R."/>
            <person name="Bi W."/>
            <person name="Bloom T."/>
            <person name="Borowsky M.L."/>
            <person name="Bugalter B.E."/>
            <person name="Butler J."/>
            <person name="Chang J.L."/>
            <person name="Chen C.-K."/>
            <person name="Cook A."/>
            <person name="Corum B."/>
            <person name="Cuomo C.A."/>
            <person name="de Jong P.J."/>
            <person name="DeCaprio D."/>
            <person name="Dewar K."/>
            <person name="FitzGerald M."/>
            <person name="Gilbert J."/>
            <person name="Gibson R."/>
            <person name="Gnerre S."/>
            <person name="Goldstein S."/>
            <person name="Grafham D.V."/>
            <person name="Grocock R."/>
            <person name="Hafez N."/>
            <person name="Hagopian D.S."/>
            <person name="Hart E."/>
            <person name="Norman C.H."/>
            <person name="Humphray S."/>
            <person name="Jaffe D.B."/>
            <person name="Jones M."/>
            <person name="Kamal M."/>
            <person name="Khodiyar V.K."/>
            <person name="LaButti K."/>
            <person name="Laird G."/>
            <person name="Lehoczky J."/>
            <person name="Liu X."/>
            <person name="Lokyitsang T."/>
            <person name="Loveland J."/>
            <person name="Lui A."/>
            <person name="Macdonald P."/>
            <person name="Major J.E."/>
            <person name="Matthews L."/>
            <person name="Mauceli E."/>
            <person name="McCarroll S.A."/>
            <person name="Mihalev A.H."/>
            <person name="Mudge J."/>
            <person name="Nguyen C."/>
            <person name="Nicol R."/>
            <person name="O'Leary S.B."/>
            <person name="Osoegawa K."/>
            <person name="Schwartz D.C."/>
            <person name="Shaw-Smith C."/>
            <person name="Stankiewicz P."/>
            <person name="Steward C."/>
            <person name="Swarbreck D."/>
            <person name="Venkataraman V."/>
            <person name="Whittaker C.A."/>
            <person name="Yang X."/>
            <person name="Zimmer A.R."/>
            <person name="Bradley A."/>
            <person name="Hubbard T."/>
            <person name="Birren B.W."/>
            <person name="Rogers J."/>
            <person name="Lander E.S."/>
            <person name="Nusbaum C."/>
        </authorList>
    </citation>
    <scope>NUCLEOTIDE SEQUENCE [LARGE SCALE GENOMIC DNA]</scope>
</reference>
<reference key="4">
    <citation type="submission" date="2005-07" db="EMBL/GenBank/DDBJ databases">
        <authorList>
            <person name="Mural R.J."/>
            <person name="Istrail S."/>
            <person name="Sutton G.G."/>
            <person name="Florea L."/>
            <person name="Halpern A.L."/>
            <person name="Mobarry C.M."/>
            <person name="Lippert R."/>
            <person name="Walenz B."/>
            <person name="Shatkay H."/>
            <person name="Dew I."/>
            <person name="Miller J.R."/>
            <person name="Flanigan M.J."/>
            <person name="Edwards N.J."/>
            <person name="Bolanos R."/>
            <person name="Fasulo D."/>
            <person name="Halldorsson B.V."/>
            <person name="Hannenhalli S."/>
            <person name="Turner R."/>
            <person name="Yooseph S."/>
            <person name="Lu F."/>
            <person name="Nusskern D.R."/>
            <person name="Shue B.C."/>
            <person name="Zheng X.H."/>
            <person name="Zhong F."/>
            <person name="Delcher A.L."/>
            <person name="Huson D.H."/>
            <person name="Kravitz S.A."/>
            <person name="Mouchard L."/>
            <person name="Reinert K."/>
            <person name="Remington K.A."/>
            <person name="Clark A.G."/>
            <person name="Waterman M.S."/>
            <person name="Eichler E.E."/>
            <person name="Adams M.D."/>
            <person name="Hunkapiller M.W."/>
            <person name="Myers E.W."/>
            <person name="Venter J.C."/>
        </authorList>
    </citation>
    <scope>NUCLEOTIDE SEQUENCE [LARGE SCALE GENOMIC DNA]</scope>
    <scope>VARIANT THR-558</scope>
</reference>
<reference key="5">
    <citation type="journal article" date="2004" name="Genome Res.">
        <title>The status, quality, and expansion of the NIH full-length cDNA project: the Mammalian Gene Collection (MGC).</title>
        <authorList>
            <consortium name="The MGC Project Team"/>
        </authorList>
    </citation>
    <scope>NUCLEOTIDE SEQUENCE [LARGE SCALE MRNA] (ISOFORM 2)</scope>
    <scope>VARIANT THR-558</scope>
    <source>
        <tissue>Brain</tissue>
    </source>
</reference>
<reference key="6">
    <citation type="journal article" date="2007" name="BMC Genomics">
        <title>The full-ORF clone resource of the German cDNA consortium.</title>
        <authorList>
            <person name="Bechtel S."/>
            <person name="Rosenfelder H."/>
            <person name="Duda A."/>
            <person name="Schmidt C.P."/>
            <person name="Ernst U."/>
            <person name="Wellenreuther R."/>
            <person name="Mehrle A."/>
            <person name="Schuster C."/>
            <person name="Bahr A."/>
            <person name="Bloecker H."/>
            <person name="Heubner D."/>
            <person name="Hoerlein A."/>
            <person name="Michel G."/>
            <person name="Wedler H."/>
            <person name="Koehrer K."/>
            <person name="Ottenwaelder B."/>
            <person name="Poustka A."/>
            <person name="Wiemann S."/>
            <person name="Schupp I."/>
        </authorList>
    </citation>
    <scope>NUCLEOTIDE SEQUENCE [LARGE SCALE MRNA] OF 330-605</scope>
    <scope>VARIANT THR-558</scope>
    <source>
        <tissue>Testis</tissue>
    </source>
</reference>
<reference key="7">
    <citation type="journal article" date="2008" name="Am. J. Hum. Genet.">
        <title>DNAI2 mutations cause primary ciliary dyskinesia with defects in the outer dynein arm.</title>
        <authorList>
            <person name="Loges N.T."/>
            <person name="Olbrich H."/>
            <person name="Fenske L."/>
            <person name="Mussaffi H."/>
            <person name="Horvath J."/>
            <person name="Fliegauf M."/>
            <person name="Kuhl H."/>
            <person name="Baktai G."/>
            <person name="Peterffy E."/>
            <person name="Chodhari R."/>
            <person name="Chung E.M."/>
            <person name="Rutman A."/>
            <person name="O'Callaghan C."/>
            <person name="Blau H."/>
            <person name="Tiszlavicz L."/>
            <person name="Voelkel K."/>
            <person name="Witt M."/>
            <person name="Zietkiewicz E."/>
            <person name="Neesen J."/>
            <person name="Reinhardt R."/>
            <person name="Mitchison H.M."/>
            <person name="Omran H."/>
        </authorList>
    </citation>
    <scope>INVOLVEMENT IN CILD9</scope>
</reference>
<reference key="8">
    <citation type="journal article" date="2014" name="PLoS Genet.">
        <title>HEATR2 plays a conserved role in assembly of the ciliary motile apparatus.</title>
        <authorList>
            <person name="Diggle C.P."/>
            <person name="Moore D.J."/>
            <person name="Mali G."/>
            <person name="zur Lage P."/>
            <person name="Ait-Lounis A."/>
            <person name="Schmidts M."/>
            <person name="Shoemark A."/>
            <person name="Garcia Munoz A."/>
            <person name="Halachev M.R."/>
            <person name="Gautier P."/>
            <person name="Yeyati P.L."/>
            <person name="Bonthron D.T."/>
            <person name="Carr I.M."/>
            <person name="Hayward B."/>
            <person name="Markham A.F."/>
            <person name="Hope J.E."/>
            <person name="von Kriegsheim A."/>
            <person name="Mitchison H.M."/>
            <person name="Jackson I.J."/>
            <person name="Durand B."/>
            <person name="Reith W."/>
            <person name="Sheridan E."/>
            <person name="Jarman A.P."/>
            <person name="Mill P."/>
        </authorList>
    </citation>
    <scope>INTERACTION WITH HEATR2</scope>
</reference>
<reference key="9">
    <citation type="journal article" date="2014" name="Eur. Respir. J.">
        <title>Ciliary beat pattern and frequency in genetic variants of primary ciliary dyskinesia.</title>
        <authorList>
            <person name="Raidt J."/>
            <person name="Wallmeier J."/>
            <person name="Hjeij R."/>
            <person name="Onnebrink J.G."/>
            <person name="Pennekamp P."/>
            <person name="Loges N.T."/>
            <person name="Olbrich H."/>
            <person name="Haeffner K."/>
            <person name="Dougherty G.W."/>
            <person name="Omran H."/>
            <person name="Werner C."/>
        </authorList>
    </citation>
    <scope>INVOLVEMENT IN CILD9</scope>
</reference>
<reference key="10">
    <citation type="journal article" date="2017" name="Nat. Commun.">
        <title>X-linked primary ciliary dyskinesia due to mutations in the cytoplasmic axonemal dynein assembly factor PIH1D3.</title>
        <authorList>
            <consortium name="UK10K Rare Group"/>
            <person name="Olcese C."/>
            <person name="Patel M.P."/>
            <person name="Shoemark A."/>
            <person name="Kiviluoto S."/>
            <person name="Legendre M."/>
            <person name="Williams H.J."/>
            <person name="Vaughan C.K."/>
            <person name="Hayward J."/>
            <person name="Goldenberg A."/>
            <person name="Emes R.D."/>
            <person name="Munye M.M."/>
            <person name="Dyer L."/>
            <person name="Cahill T."/>
            <person name="Bevillard J."/>
            <person name="Gehrig C."/>
            <person name="Guipponi M."/>
            <person name="Chantot S."/>
            <person name="Duquesnoy P."/>
            <person name="Thomas L."/>
            <person name="Jeanson L."/>
            <person name="Copin B."/>
            <person name="Tamalet A."/>
            <person name="Thauvin-Robinet C."/>
            <person name="Papon J.F."/>
            <person name="Garin A."/>
            <person name="Pin I."/>
            <person name="Vera G."/>
            <person name="Aurora P."/>
            <person name="Fassad M.R."/>
            <person name="Jenkins L."/>
            <person name="Boustred C."/>
            <person name="Cullup T."/>
            <person name="Dixon M."/>
            <person name="Onoufriadis A."/>
            <person name="Bush A."/>
            <person name="Chung E.M."/>
            <person name="Antonarakis S.E."/>
            <person name="Loebinger M.R."/>
            <person name="Wilson R."/>
            <person name="Armengot M."/>
            <person name="Escudier E."/>
            <person name="Hogg C."/>
            <person name="Amselem S."/>
            <person name="Sun Z."/>
            <person name="Bartoloni L."/>
            <person name="Blouin J.L."/>
            <person name="Mitchison H.M."/>
        </authorList>
    </citation>
    <scope>INTERACTION WITH DNAAF6</scope>
</reference>
<reference key="11">
    <citation type="journal article" date="2020" name="Nat. Commun.">
        <title>CFAP45 deficiency causes situs abnormalities and asthenospermia by disrupting an axonemal adenine nucleotide homeostasis module.</title>
        <authorList>
            <person name="Dougherty G.W."/>
            <person name="Mizuno K."/>
            <person name="Noethe-Menchen T."/>
            <person name="Ikawa Y."/>
            <person name="Boldt K."/>
            <person name="Ta-Shma A."/>
            <person name="Aprea I."/>
            <person name="Minegishi K."/>
            <person name="Pang Y.P."/>
            <person name="Pennekamp P."/>
            <person name="Loges N.T."/>
            <person name="Raidt J."/>
            <person name="Hjeij R."/>
            <person name="Wallmeier J."/>
            <person name="Mussaffi H."/>
            <person name="Perles Z."/>
            <person name="Elpeleg O."/>
            <person name="Rabert F."/>
            <person name="Shiratori H."/>
            <person name="Letteboer S.J."/>
            <person name="Horn N."/>
            <person name="Young S."/>
            <person name="Struenker T."/>
            <person name="Stumme F."/>
            <person name="Werner C."/>
            <person name="Olbrich H."/>
            <person name="Takaoka K."/>
            <person name="Ide T."/>
            <person name="Twan W.K."/>
            <person name="Biebach L."/>
            <person name="Grosse-Onnebrink J."/>
            <person name="Klinkenbusch J.A."/>
            <person name="Praveen K."/>
            <person name="Bracht D.C."/>
            <person name="Hoeben I.M."/>
            <person name="Junger K."/>
            <person name="Guetzlaff J."/>
            <person name="Cindric S."/>
            <person name="Aviram M."/>
            <person name="Kaiser T."/>
            <person name="Memari Y."/>
            <person name="Dzeja P.P."/>
            <person name="Dworniczak B."/>
            <person name="Ueffing M."/>
            <person name="Roepman R."/>
            <person name="Bartscherer K."/>
            <person name="Katsanis N."/>
            <person name="Davis E.E."/>
            <person name="Amirav I."/>
            <person name="Hamada H."/>
            <person name="Omran H."/>
        </authorList>
    </citation>
    <scope>SUBCELLULAR LOCATION</scope>
    <scope>TISSUE SPECIFICITY</scope>
</reference>